<reference key="1">
    <citation type="journal article" date="2002" name="Nature">
        <title>The genome sequence and structure of rice chromosome 1.</title>
        <authorList>
            <person name="Sasaki T."/>
            <person name="Matsumoto T."/>
            <person name="Yamamoto K."/>
            <person name="Sakata K."/>
            <person name="Baba T."/>
            <person name="Katayose Y."/>
            <person name="Wu J."/>
            <person name="Niimura Y."/>
            <person name="Cheng Z."/>
            <person name="Nagamura Y."/>
            <person name="Antonio B.A."/>
            <person name="Kanamori H."/>
            <person name="Hosokawa S."/>
            <person name="Masukawa M."/>
            <person name="Arikawa K."/>
            <person name="Chiden Y."/>
            <person name="Hayashi M."/>
            <person name="Okamoto M."/>
            <person name="Ando T."/>
            <person name="Aoki H."/>
            <person name="Arita K."/>
            <person name="Hamada M."/>
            <person name="Harada C."/>
            <person name="Hijishita S."/>
            <person name="Honda M."/>
            <person name="Ichikawa Y."/>
            <person name="Idonuma A."/>
            <person name="Iijima M."/>
            <person name="Ikeda M."/>
            <person name="Ikeno M."/>
            <person name="Ito S."/>
            <person name="Ito T."/>
            <person name="Ito Y."/>
            <person name="Ito Y."/>
            <person name="Iwabuchi A."/>
            <person name="Kamiya K."/>
            <person name="Karasawa W."/>
            <person name="Katagiri S."/>
            <person name="Kikuta A."/>
            <person name="Kobayashi N."/>
            <person name="Kono I."/>
            <person name="Machita K."/>
            <person name="Maehara T."/>
            <person name="Mizuno H."/>
            <person name="Mizubayashi T."/>
            <person name="Mukai Y."/>
            <person name="Nagasaki H."/>
            <person name="Nakashima M."/>
            <person name="Nakama Y."/>
            <person name="Nakamichi Y."/>
            <person name="Nakamura M."/>
            <person name="Namiki N."/>
            <person name="Negishi M."/>
            <person name="Ohta I."/>
            <person name="Ono N."/>
            <person name="Saji S."/>
            <person name="Sakai K."/>
            <person name="Shibata M."/>
            <person name="Shimokawa T."/>
            <person name="Shomura A."/>
            <person name="Song J."/>
            <person name="Takazaki Y."/>
            <person name="Terasawa K."/>
            <person name="Tsuji K."/>
            <person name="Waki K."/>
            <person name="Yamagata H."/>
            <person name="Yamane H."/>
            <person name="Yoshiki S."/>
            <person name="Yoshihara R."/>
            <person name="Yukawa K."/>
            <person name="Zhong H."/>
            <person name="Iwama H."/>
            <person name="Endo T."/>
            <person name="Ito H."/>
            <person name="Hahn J.H."/>
            <person name="Kim H.-I."/>
            <person name="Eun M.-Y."/>
            <person name="Yano M."/>
            <person name="Jiang J."/>
            <person name="Gojobori T."/>
        </authorList>
    </citation>
    <scope>NUCLEOTIDE SEQUENCE [LARGE SCALE GENOMIC DNA]</scope>
    <source>
        <strain>cv. Nipponbare</strain>
    </source>
</reference>
<reference key="2">
    <citation type="journal article" date="2005" name="Nature">
        <title>The map-based sequence of the rice genome.</title>
        <authorList>
            <consortium name="International rice genome sequencing project (IRGSP)"/>
        </authorList>
    </citation>
    <scope>NUCLEOTIDE SEQUENCE [LARGE SCALE GENOMIC DNA]</scope>
    <source>
        <strain>cv. Nipponbare</strain>
    </source>
</reference>
<reference key="3">
    <citation type="journal article" date="2008" name="Nucleic Acids Res.">
        <title>The rice annotation project database (RAP-DB): 2008 update.</title>
        <authorList>
            <consortium name="The rice annotation project (RAP)"/>
        </authorList>
    </citation>
    <scope>GENOME REANNOTATION</scope>
    <source>
        <strain>cv. Nipponbare</strain>
    </source>
</reference>
<reference key="4">
    <citation type="journal article" date="2013" name="Rice">
        <title>Improvement of the Oryza sativa Nipponbare reference genome using next generation sequence and optical map data.</title>
        <authorList>
            <person name="Kawahara Y."/>
            <person name="de la Bastide M."/>
            <person name="Hamilton J.P."/>
            <person name="Kanamori H."/>
            <person name="McCombie W.R."/>
            <person name="Ouyang S."/>
            <person name="Schwartz D.C."/>
            <person name="Tanaka T."/>
            <person name="Wu J."/>
            <person name="Zhou S."/>
            <person name="Childs K.L."/>
            <person name="Davidson R.M."/>
            <person name="Lin H."/>
            <person name="Quesada-Ocampo L."/>
            <person name="Vaillancourt B."/>
            <person name="Sakai H."/>
            <person name="Lee S.S."/>
            <person name="Kim J."/>
            <person name="Numa H."/>
            <person name="Itoh T."/>
            <person name="Buell C.R."/>
            <person name="Matsumoto T."/>
        </authorList>
    </citation>
    <scope>GENOME REANNOTATION</scope>
    <source>
        <strain>cv. Nipponbare</strain>
    </source>
</reference>
<reference key="5">
    <citation type="journal article" date="2005" name="PLoS Biol.">
        <title>The genomes of Oryza sativa: a history of duplications.</title>
        <authorList>
            <person name="Yu J."/>
            <person name="Wang J."/>
            <person name="Lin W."/>
            <person name="Li S."/>
            <person name="Li H."/>
            <person name="Zhou J."/>
            <person name="Ni P."/>
            <person name="Dong W."/>
            <person name="Hu S."/>
            <person name="Zeng C."/>
            <person name="Zhang J."/>
            <person name="Zhang Y."/>
            <person name="Li R."/>
            <person name="Xu Z."/>
            <person name="Li S."/>
            <person name="Li X."/>
            <person name="Zheng H."/>
            <person name="Cong L."/>
            <person name="Lin L."/>
            <person name="Yin J."/>
            <person name="Geng J."/>
            <person name="Li G."/>
            <person name="Shi J."/>
            <person name="Liu J."/>
            <person name="Lv H."/>
            <person name="Li J."/>
            <person name="Wang J."/>
            <person name="Deng Y."/>
            <person name="Ran L."/>
            <person name="Shi X."/>
            <person name="Wang X."/>
            <person name="Wu Q."/>
            <person name="Li C."/>
            <person name="Ren X."/>
            <person name="Wang J."/>
            <person name="Wang X."/>
            <person name="Li D."/>
            <person name="Liu D."/>
            <person name="Zhang X."/>
            <person name="Ji Z."/>
            <person name="Zhao W."/>
            <person name="Sun Y."/>
            <person name="Zhang Z."/>
            <person name="Bao J."/>
            <person name="Han Y."/>
            <person name="Dong L."/>
            <person name="Ji J."/>
            <person name="Chen P."/>
            <person name="Wu S."/>
            <person name="Liu J."/>
            <person name="Xiao Y."/>
            <person name="Bu D."/>
            <person name="Tan J."/>
            <person name="Yang L."/>
            <person name="Ye C."/>
            <person name="Zhang J."/>
            <person name="Xu J."/>
            <person name="Zhou Y."/>
            <person name="Yu Y."/>
            <person name="Zhang B."/>
            <person name="Zhuang S."/>
            <person name="Wei H."/>
            <person name="Liu B."/>
            <person name="Lei M."/>
            <person name="Yu H."/>
            <person name="Li Y."/>
            <person name="Xu H."/>
            <person name="Wei S."/>
            <person name="He X."/>
            <person name="Fang L."/>
            <person name="Zhang Z."/>
            <person name="Zhang Y."/>
            <person name="Huang X."/>
            <person name="Su Z."/>
            <person name="Tong W."/>
            <person name="Li J."/>
            <person name="Tong Z."/>
            <person name="Li S."/>
            <person name="Ye J."/>
            <person name="Wang L."/>
            <person name="Fang L."/>
            <person name="Lei T."/>
            <person name="Chen C.-S."/>
            <person name="Chen H.-C."/>
            <person name="Xu Z."/>
            <person name="Li H."/>
            <person name="Huang H."/>
            <person name="Zhang F."/>
            <person name="Xu H."/>
            <person name="Li N."/>
            <person name="Zhao C."/>
            <person name="Li S."/>
            <person name="Dong L."/>
            <person name="Huang Y."/>
            <person name="Li L."/>
            <person name="Xi Y."/>
            <person name="Qi Q."/>
            <person name="Li W."/>
            <person name="Zhang B."/>
            <person name="Hu W."/>
            <person name="Zhang Y."/>
            <person name="Tian X."/>
            <person name="Jiao Y."/>
            <person name="Liang X."/>
            <person name="Jin J."/>
            <person name="Gao L."/>
            <person name="Zheng W."/>
            <person name="Hao B."/>
            <person name="Liu S.-M."/>
            <person name="Wang W."/>
            <person name="Yuan L."/>
            <person name="Cao M."/>
            <person name="McDermott J."/>
            <person name="Samudrala R."/>
            <person name="Wang J."/>
            <person name="Wong G.K.-S."/>
            <person name="Yang H."/>
        </authorList>
    </citation>
    <scope>NUCLEOTIDE SEQUENCE [LARGE SCALE GENOMIC DNA]</scope>
    <source>
        <strain>cv. Nipponbare</strain>
    </source>
</reference>
<reference key="6">
    <citation type="journal article" date="2003" name="Science">
        <title>Collection, mapping, and annotation of over 28,000 cDNA clones from japonica rice.</title>
        <authorList>
            <consortium name="The rice full-length cDNA consortium"/>
        </authorList>
    </citation>
    <scope>NUCLEOTIDE SEQUENCE [LARGE SCALE MRNA]</scope>
    <source>
        <strain>cv. Nipponbare</strain>
    </source>
</reference>
<reference key="7">
    <citation type="journal article" date="2007" name="BMC Plant Biol.">
        <title>Genome-wide identification and analyses of the rice calmodulin and related potential calcium sensor proteins.</title>
        <authorList>
            <person name="Boonburapong B."/>
            <person name="Buaboocha T."/>
        </authorList>
    </citation>
    <scope>GENE FAMILY</scope>
    <scope>NOMENCLATURE</scope>
</reference>
<accession>Q8RZB5</accession>
<accession>B7EI86</accession>
<evidence type="ECO:0000250" key="1"/>
<evidence type="ECO:0000255" key="2">
    <source>
        <dbReference type="PROSITE-ProRule" id="PRU00448"/>
    </source>
</evidence>
<evidence type="ECO:0000256" key="3">
    <source>
        <dbReference type="SAM" id="MobiDB-lite"/>
    </source>
</evidence>
<evidence type="ECO:0000305" key="4"/>
<evidence type="ECO:0000312" key="5">
    <source>
        <dbReference type="EMBL" id="EEE56004.1"/>
    </source>
</evidence>
<gene>
    <name type="primary">CML10</name>
    <name type="ordered locus">Os01g0949500</name>
    <name type="ordered locus">LOC_Os01g72100</name>
    <name type="ORF">B1147A04.18</name>
    <name evidence="5" type="ORF">OsJ_04761</name>
</gene>
<sequence>MVKIKMPALFRRRSGSKSPPLPQADPASGGGSPAPTPEEEMERVFRKFDANGDGRISRSELGALFESLGHAATDDELARMMAEADADGDGFISLDEFAALNATASGDAAAVEEDLRHAFRVFDADGNGTISAAELARVLHGLGEKATVQQCRRMIEGVDQNGDGLISFEEFKVMMAGGGSFAKIA</sequence>
<organism>
    <name type="scientific">Oryza sativa subsp. japonica</name>
    <name type="common">Rice</name>
    <dbReference type="NCBI Taxonomy" id="39947"/>
    <lineage>
        <taxon>Eukaryota</taxon>
        <taxon>Viridiplantae</taxon>
        <taxon>Streptophyta</taxon>
        <taxon>Embryophyta</taxon>
        <taxon>Tracheophyta</taxon>
        <taxon>Spermatophyta</taxon>
        <taxon>Magnoliopsida</taxon>
        <taxon>Liliopsida</taxon>
        <taxon>Poales</taxon>
        <taxon>Poaceae</taxon>
        <taxon>BOP clade</taxon>
        <taxon>Oryzoideae</taxon>
        <taxon>Oryzeae</taxon>
        <taxon>Oryzinae</taxon>
        <taxon>Oryza</taxon>
        <taxon>Oryza sativa</taxon>
    </lineage>
</organism>
<dbReference type="EMBL" id="AP003735">
    <property type="protein sequence ID" value="BAB86193.1"/>
    <property type="molecule type" value="Genomic_DNA"/>
</dbReference>
<dbReference type="EMBL" id="AP008207">
    <property type="protein sequence ID" value="BAF07314.1"/>
    <property type="molecule type" value="Genomic_DNA"/>
</dbReference>
<dbReference type="EMBL" id="AP014957">
    <property type="protein sequence ID" value="BAS76227.1"/>
    <property type="molecule type" value="Genomic_DNA"/>
</dbReference>
<dbReference type="EMBL" id="CM000138">
    <property type="protein sequence ID" value="EEE56004.1"/>
    <property type="molecule type" value="Genomic_DNA"/>
</dbReference>
<dbReference type="EMBL" id="AK070662">
    <property type="protein sequence ID" value="BAG92083.1"/>
    <property type="molecule type" value="mRNA"/>
</dbReference>
<dbReference type="EMBL" id="AK104094">
    <property type="protein sequence ID" value="BAG96408.1"/>
    <property type="molecule type" value="mRNA"/>
</dbReference>
<dbReference type="EMBL" id="AK104159">
    <property type="protein sequence ID" value="BAG96462.1"/>
    <property type="molecule type" value="mRNA"/>
</dbReference>
<dbReference type="RefSeq" id="XP_015622317.1">
    <property type="nucleotide sequence ID" value="XM_015766831.1"/>
</dbReference>
<dbReference type="SMR" id="Q8RZB5"/>
<dbReference type="FunCoup" id="Q8RZB5">
    <property type="interactions" value="155"/>
</dbReference>
<dbReference type="STRING" id="39947.Q8RZB5"/>
<dbReference type="PaxDb" id="39947-Q8RZB5"/>
<dbReference type="EnsemblPlants" id="Os01t0949500-01">
    <property type="protein sequence ID" value="Os01t0949500-01"/>
    <property type="gene ID" value="Os01g0949500"/>
</dbReference>
<dbReference type="Gramene" id="Os01t0949500-01">
    <property type="protein sequence ID" value="Os01t0949500-01"/>
    <property type="gene ID" value="Os01g0949500"/>
</dbReference>
<dbReference type="KEGG" id="dosa:Os01g0949500"/>
<dbReference type="eggNOG" id="KOG0027">
    <property type="taxonomic scope" value="Eukaryota"/>
</dbReference>
<dbReference type="HOGENOM" id="CLU_061288_20_4_1"/>
<dbReference type="InParanoid" id="Q8RZB5"/>
<dbReference type="OMA" id="MGKIRMP"/>
<dbReference type="OrthoDB" id="26525at2759"/>
<dbReference type="Proteomes" id="UP000000763">
    <property type="component" value="Chromosome 1"/>
</dbReference>
<dbReference type="Proteomes" id="UP000007752">
    <property type="component" value="Chromosome 1"/>
</dbReference>
<dbReference type="Proteomes" id="UP000059680">
    <property type="component" value="Chromosome 1"/>
</dbReference>
<dbReference type="GO" id="GO:0005509">
    <property type="term" value="F:calcium ion binding"/>
    <property type="evidence" value="ECO:0007669"/>
    <property type="project" value="InterPro"/>
</dbReference>
<dbReference type="CDD" id="cd00051">
    <property type="entry name" value="EFh"/>
    <property type="match status" value="2"/>
</dbReference>
<dbReference type="FunFam" id="1.10.238.10:FF:000003">
    <property type="entry name" value="Calmodulin A"/>
    <property type="match status" value="1"/>
</dbReference>
<dbReference type="Gene3D" id="1.10.238.10">
    <property type="entry name" value="EF-hand"/>
    <property type="match status" value="2"/>
</dbReference>
<dbReference type="InterPro" id="IPR011992">
    <property type="entry name" value="EF-hand-dom_pair"/>
</dbReference>
<dbReference type="InterPro" id="IPR018247">
    <property type="entry name" value="EF_Hand_1_Ca_BS"/>
</dbReference>
<dbReference type="InterPro" id="IPR002048">
    <property type="entry name" value="EF_hand_dom"/>
</dbReference>
<dbReference type="InterPro" id="IPR039647">
    <property type="entry name" value="EF_hand_pair_protein_CML-like"/>
</dbReference>
<dbReference type="PANTHER" id="PTHR10891">
    <property type="entry name" value="EF-HAND CALCIUM-BINDING DOMAIN CONTAINING PROTEIN"/>
    <property type="match status" value="1"/>
</dbReference>
<dbReference type="Pfam" id="PF13499">
    <property type="entry name" value="EF-hand_7"/>
    <property type="match status" value="2"/>
</dbReference>
<dbReference type="SMART" id="SM00054">
    <property type="entry name" value="EFh"/>
    <property type="match status" value="4"/>
</dbReference>
<dbReference type="SUPFAM" id="SSF47473">
    <property type="entry name" value="EF-hand"/>
    <property type="match status" value="1"/>
</dbReference>
<dbReference type="PROSITE" id="PS00018">
    <property type="entry name" value="EF_HAND_1"/>
    <property type="match status" value="4"/>
</dbReference>
<dbReference type="PROSITE" id="PS50222">
    <property type="entry name" value="EF_HAND_2"/>
    <property type="match status" value="4"/>
</dbReference>
<name>CML10_ORYSJ</name>
<protein>
    <recommendedName>
        <fullName>Probable calcium-binding protein CML10</fullName>
    </recommendedName>
    <alternativeName>
        <fullName>Calmodulin-like protein 10</fullName>
    </alternativeName>
</protein>
<comment type="function">
    <text evidence="1">Potential calcium sensor.</text>
</comment>
<comment type="caution">
    <text evidence="4">Although assigned as a calmodulin family member by PubMed:17263873, it only contains EF-hand domains.</text>
</comment>
<keyword id="KW-0106">Calcium</keyword>
<keyword id="KW-0479">Metal-binding</keyword>
<keyword id="KW-1185">Reference proteome</keyword>
<keyword id="KW-0677">Repeat</keyword>
<feature type="chain" id="PRO_0000338425" description="Probable calcium-binding protein CML10">
    <location>
        <begin position="1"/>
        <end position="185"/>
    </location>
</feature>
<feature type="domain" description="EF-hand 1" evidence="2">
    <location>
        <begin position="36"/>
        <end position="71"/>
    </location>
</feature>
<feature type="domain" description="EF-hand 2" evidence="2">
    <location>
        <begin position="72"/>
        <end position="107"/>
    </location>
</feature>
<feature type="domain" description="EF-hand 3" evidence="2">
    <location>
        <begin position="110"/>
        <end position="145"/>
    </location>
</feature>
<feature type="domain" description="EF-hand 4" evidence="2">
    <location>
        <begin position="146"/>
        <end position="181"/>
    </location>
</feature>
<feature type="region of interest" description="Disordered" evidence="3">
    <location>
        <begin position="1"/>
        <end position="41"/>
    </location>
</feature>
<feature type="binding site" evidence="2">
    <location>
        <position position="49"/>
    </location>
    <ligand>
        <name>Ca(2+)</name>
        <dbReference type="ChEBI" id="CHEBI:29108"/>
        <label>1</label>
    </ligand>
</feature>
<feature type="binding site" evidence="2">
    <location>
        <position position="51"/>
    </location>
    <ligand>
        <name>Ca(2+)</name>
        <dbReference type="ChEBI" id="CHEBI:29108"/>
        <label>1</label>
    </ligand>
</feature>
<feature type="binding site" evidence="2">
    <location>
        <position position="53"/>
    </location>
    <ligand>
        <name>Ca(2+)</name>
        <dbReference type="ChEBI" id="CHEBI:29108"/>
        <label>1</label>
    </ligand>
</feature>
<feature type="binding site" evidence="2">
    <location>
        <position position="55"/>
    </location>
    <ligand>
        <name>Ca(2+)</name>
        <dbReference type="ChEBI" id="CHEBI:29108"/>
        <label>1</label>
    </ligand>
</feature>
<feature type="binding site" evidence="2">
    <location>
        <position position="60"/>
    </location>
    <ligand>
        <name>Ca(2+)</name>
        <dbReference type="ChEBI" id="CHEBI:29108"/>
        <label>1</label>
    </ligand>
</feature>
<feature type="binding site" evidence="2">
    <location>
        <position position="85"/>
    </location>
    <ligand>
        <name>Ca(2+)</name>
        <dbReference type="ChEBI" id="CHEBI:29108"/>
        <label>2</label>
    </ligand>
</feature>
<feature type="binding site" evidence="2">
    <location>
        <position position="87"/>
    </location>
    <ligand>
        <name>Ca(2+)</name>
        <dbReference type="ChEBI" id="CHEBI:29108"/>
        <label>2</label>
    </ligand>
</feature>
<feature type="binding site" evidence="2">
    <location>
        <position position="89"/>
    </location>
    <ligand>
        <name>Ca(2+)</name>
        <dbReference type="ChEBI" id="CHEBI:29108"/>
        <label>2</label>
    </ligand>
</feature>
<feature type="binding site" evidence="2">
    <location>
        <position position="96"/>
    </location>
    <ligand>
        <name>Ca(2+)</name>
        <dbReference type="ChEBI" id="CHEBI:29108"/>
        <label>2</label>
    </ligand>
</feature>
<feature type="binding site" evidence="2">
    <location>
        <position position="123"/>
    </location>
    <ligand>
        <name>Ca(2+)</name>
        <dbReference type="ChEBI" id="CHEBI:29108"/>
        <label>3</label>
    </ligand>
</feature>
<feature type="binding site" evidence="2">
    <location>
        <position position="125"/>
    </location>
    <ligand>
        <name>Ca(2+)</name>
        <dbReference type="ChEBI" id="CHEBI:29108"/>
        <label>3</label>
    </ligand>
</feature>
<feature type="binding site" evidence="2">
    <location>
        <position position="127"/>
    </location>
    <ligand>
        <name>Ca(2+)</name>
        <dbReference type="ChEBI" id="CHEBI:29108"/>
        <label>3</label>
    </ligand>
</feature>
<feature type="binding site" evidence="2">
    <location>
        <position position="129"/>
    </location>
    <ligand>
        <name>Ca(2+)</name>
        <dbReference type="ChEBI" id="CHEBI:29108"/>
        <label>3</label>
    </ligand>
</feature>
<feature type="binding site" evidence="2">
    <location>
        <position position="134"/>
    </location>
    <ligand>
        <name>Ca(2+)</name>
        <dbReference type="ChEBI" id="CHEBI:29108"/>
        <label>3</label>
    </ligand>
</feature>
<feature type="binding site" evidence="2">
    <location>
        <position position="159"/>
    </location>
    <ligand>
        <name>Ca(2+)</name>
        <dbReference type="ChEBI" id="CHEBI:29108"/>
        <label>4</label>
    </ligand>
</feature>
<feature type="binding site" evidence="2">
    <location>
        <position position="161"/>
    </location>
    <ligand>
        <name>Ca(2+)</name>
        <dbReference type="ChEBI" id="CHEBI:29108"/>
        <label>4</label>
    </ligand>
</feature>
<feature type="binding site" evidence="2">
    <location>
        <position position="163"/>
    </location>
    <ligand>
        <name>Ca(2+)</name>
        <dbReference type="ChEBI" id="CHEBI:29108"/>
        <label>4</label>
    </ligand>
</feature>
<feature type="binding site" evidence="2">
    <location>
        <position position="170"/>
    </location>
    <ligand>
        <name>Ca(2+)</name>
        <dbReference type="ChEBI" id="CHEBI:29108"/>
        <label>4</label>
    </ligand>
</feature>
<proteinExistence type="evidence at transcript level"/>